<protein>
    <recommendedName>
        <fullName evidence="1">Ribonuclease PH</fullName>
        <shortName evidence="1">RNase PH</shortName>
        <ecNumber evidence="1">2.7.7.56</ecNumber>
    </recommendedName>
    <alternativeName>
        <fullName evidence="1">tRNA nucleotidyltransferase</fullName>
    </alternativeName>
</protein>
<gene>
    <name evidence="1" type="primary">rph</name>
    <name type="ordered locus">RP628</name>
</gene>
<keyword id="KW-0548">Nucleotidyltransferase</keyword>
<keyword id="KW-1185">Reference proteome</keyword>
<keyword id="KW-0694">RNA-binding</keyword>
<keyword id="KW-0698">rRNA processing</keyword>
<keyword id="KW-0808">Transferase</keyword>
<keyword id="KW-0819">tRNA processing</keyword>
<keyword id="KW-0820">tRNA-binding</keyword>
<organism>
    <name type="scientific">Rickettsia prowazekii (strain Madrid E)</name>
    <dbReference type="NCBI Taxonomy" id="272947"/>
    <lineage>
        <taxon>Bacteria</taxon>
        <taxon>Pseudomonadati</taxon>
        <taxon>Pseudomonadota</taxon>
        <taxon>Alphaproteobacteria</taxon>
        <taxon>Rickettsiales</taxon>
        <taxon>Rickettsiaceae</taxon>
        <taxon>Rickettsieae</taxon>
        <taxon>Rickettsia</taxon>
        <taxon>typhus group</taxon>
    </lineage>
</organism>
<comment type="function">
    <text evidence="1">Phosphorolytic 3'-5' exoribonuclease that plays an important role in tRNA 3'-end maturation. Removes nucleotide residues following the 3'-CCA terminus of tRNAs; can also add nucleotides to the ends of RNA molecules by using nucleoside diphosphates as substrates, but this may not be physiologically important. Probably plays a role in initiation of 16S rRNA degradation (leading to ribosome degradation) during starvation.</text>
</comment>
<comment type="catalytic activity">
    <reaction evidence="1">
        <text>tRNA(n+1) + phosphate = tRNA(n) + a ribonucleoside 5'-diphosphate</text>
        <dbReference type="Rhea" id="RHEA:10628"/>
        <dbReference type="Rhea" id="RHEA-COMP:17343"/>
        <dbReference type="Rhea" id="RHEA-COMP:17344"/>
        <dbReference type="ChEBI" id="CHEBI:43474"/>
        <dbReference type="ChEBI" id="CHEBI:57930"/>
        <dbReference type="ChEBI" id="CHEBI:173114"/>
        <dbReference type="EC" id="2.7.7.56"/>
    </reaction>
</comment>
<comment type="subunit">
    <text evidence="1">Homohexameric ring arranged as a trimer of dimers.</text>
</comment>
<comment type="similarity">
    <text evidence="1">Belongs to the RNase PH family.</text>
</comment>
<sequence length="240" mass="26202">MRQSGRKSNQLRPISLELSPLINAEGSCLIKIGNTHVMCSATCETTVPPFLRGQNQGWITAEYGMIPGSTSHRIKREAALGKQGGRTQEIQRLIGRAMRCVINLQKLGERQIIIDCDVINADGGTRTAAITGSYVALHLAIRSLMKKRILKVNPLISQIAAISCGIYKGNAVLDLDYLEDSDAEVDSNFVFACNGNLIEVQGTAEKEPFSEEQFLAMLKLAKSGVVELFKLQNQVLIAAE</sequence>
<name>RNPH_RICPR</name>
<feature type="chain" id="PRO_0000139933" description="Ribonuclease PH">
    <location>
        <begin position="1"/>
        <end position="240"/>
    </location>
</feature>
<feature type="binding site" evidence="1">
    <location>
        <position position="86"/>
    </location>
    <ligand>
        <name>phosphate</name>
        <dbReference type="ChEBI" id="CHEBI:43474"/>
        <note>substrate</note>
    </ligand>
</feature>
<feature type="binding site" evidence="1">
    <location>
        <begin position="124"/>
        <end position="126"/>
    </location>
    <ligand>
        <name>phosphate</name>
        <dbReference type="ChEBI" id="CHEBI:43474"/>
        <note>substrate</note>
    </ligand>
</feature>
<dbReference type="EC" id="2.7.7.56" evidence="1"/>
<dbReference type="EMBL" id="AJ235272">
    <property type="protein sequence ID" value="CAA15069.1"/>
    <property type="molecule type" value="Genomic_DNA"/>
</dbReference>
<dbReference type="PIR" id="C71668">
    <property type="entry name" value="C71668"/>
</dbReference>
<dbReference type="RefSeq" id="NP_220993.1">
    <property type="nucleotide sequence ID" value="NC_000963.1"/>
</dbReference>
<dbReference type="RefSeq" id="WP_004596258.1">
    <property type="nucleotide sequence ID" value="NC_000963.1"/>
</dbReference>
<dbReference type="SMR" id="Q9ZCT5"/>
<dbReference type="STRING" id="272947.gene:17555705"/>
<dbReference type="EnsemblBacteria" id="CAA15069">
    <property type="protein sequence ID" value="CAA15069"/>
    <property type="gene ID" value="CAA15069"/>
</dbReference>
<dbReference type="GeneID" id="57569753"/>
<dbReference type="KEGG" id="rpr:RP628"/>
<dbReference type="PATRIC" id="fig|272947.5.peg.650"/>
<dbReference type="eggNOG" id="COG0689">
    <property type="taxonomic scope" value="Bacteria"/>
</dbReference>
<dbReference type="HOGENOM" id="CLU_050858_0_0_5"/>
<dbReference type="OrthoDB" id="9802265at2"/>
<dbReference type="Proteomes" id="UP000002480">
    <property type="component" value="Chromosome"/>
</dbReference>
<dbReference type="GO" id="GO:0000175">
    <property type="term" value="F:3'-5'-RNA exonuclease activity"/>
    <property type="evidence" value="ECO:0007669"/>
    <property type="project" value="UniProtKB-UniRule"/>
</dbReference>
<dbReference type="GO" id="GO:0000049">
    <property type="term" value="F:tRNA binding"/>
    <property type="evidence" value="ECO:0007669"/>
    <property type="project" value="UniProtKB-UniRule"/>
</dbReference>
<dbReference type="GO" id="GO:0009022">
    <property type="term" value="F:tRNA nucleotidyltransferase activity"/>
    <property type="evidence" value="ECO:0007669"/>
    <property type="project" value="UniProtKB-UniRule"/>
</dbReference>
<dbReference type="GO" id="GO:0016075">
    <property type="term" value="P:rRNA catabolic process"/>
    <property type="evidence" value="ECO:0007669"/>
    <property type="project" value="UniProtKB-UniRule"/>
</dbReference>
<dbReference type="GO" id="GO:0006364">
    <property type="term" value="P:rRNA processing"/>
    <property type="evidence" value="ECO:0007669"/>
    <property type="project" value="UniProtKB-KW"/>
</dbReference>
<dbReference type="GO" id="GO:0008033">
    <property type="term" value="P:tRNA processing"/>
    <property type="evidence" value="ECO:0007669"/>
    <property type="project" value="UniProtKB-UniRule"/>
</dbReference>
<dbReference type="CDD" id="cd11362">
    <property type="entry name" value="RNase_PH_bact"/>
    <property type="match status" value="1"/>
</dbReference>
<dbReference type="FunFam" id="3.30.230.70:FF:000003">
    <property type="entry name" value="Ribonuclease PH"/>
    <property type="match status" value="1"/>
</dbReference>
<dbReference type="Gene3D" id="3.30.230.70">
    <property type="entry name" value="GHMP Kinase, N-terminal domain"/>
    <property type="match status" value="1"/>
</dbReference>
<dbReference type="HAMAP" id="MF_00564">
    <property type="entry name" value="RNase_PH"/>
    <property type="match status" value="1"/>
</dbReference>
<dbReference type="InterPro" id="IPR001247">
    <property type="entry name" value="ExoRNase_PH_dom1"/>
</dbReference>
<dbReference type="InterPro" id="IPR015847">
    <property type="entry name" value="ExoRNase_PH_dom2"/>
</dbReference>
<dbReference type="InterPro" id="IPR036345">
    <property type="entry name" value="ExoRNase_PH_dom2_sf"/>
</dbReference>
<dbReference type="InterPro" id="IPR027408">
    <property type="entry name" value="PNPase/RNase_PH_dom_sf"/>
</dbReference>
<dbReference type="InterPro" id="IPR020568">
    <property type="entry name" value="Ribosomal_Su5_D2-typ_SF"/>
</dbReference>
<dbReference type="InterPro" id="IPR050080">
    <property type="entry name" value="RNase_PH"/>
</dbReference>
<dbReference type="InterPro" id="IPR002381">
    <property type="entry name" value="RNase_PH_bac-type"/>
</dbReference>
<dbReference type="InterPro" id="IPR018336">
    <property type="entry name" value="RNase_PH_CS"/>
</dbReference>
<dbReference type="NCBIfam" id="TIGR01966">
    <property type="entry name" value="RNasePH"/>
    <property type="match status" value="1"/>
</dbReference>
<dbReference type="PANTHER" id="PTHR11953">
    <property type="entry name" value="EXOSOME COMPLEX COMPONENT"/>
    <property type="match status" value="1"/>
</dbReference>
<dbReference type="PANTHER" id="PTHR11953:SF0">
    <property type="entry name" value="EXOSOME COMPLEX COMPONENT RRP41"/>
    <property type="match status" value="1"/>
</dbReference>
<dbReference type="Pfam" id="PF01138">
    <property type="entry name" value="RNase_PH"/>
    <property type="match status" value="1"/>
</dbReference>
<dbReference type="Pfam" id="PF03725">
    <property type="entry name" value="RNase_PH_C"/>
    <property type="match status" value="1"/>
</dbReference>
<dbReference type="SUPFAM" id="SSF55666">
    <property type="entry name" value="Ribonuclease PH domain 2-like"/>
    <property type="match status" value="1"/>
</dbReference>
<dbReference type="SUPFAM" id="SSF54211">
    <property type="entry name" value="Ribosomal protein S5 domain 2-like"/>
    <property type="match status" value="1"/>
</dbReference>
<dbReference type="PROSITE" id="PS01277">
    <property type="entry name" value="RIBONUCLEASE_PH"/>
    <property type="match status" value="1"/>
</dbReference>
<evidence type="ECO:0000255" key="1">
    <source>
        <dbReference type="HAMAP-Rule" id="MF_00564"/>
    </source>
</evidence>
<accession>Q9ZCT5</accession>
<reference key="1">
    <citation type="journal article" date="1998" name="Nature">
        <title>The genome sequence of Rickettsia prowazekii and the origin of mitochondria.</title>
        <authorList>
            <person name="Andersson S.G.E."/>
            <person name="Zomorodipour A."/>
            <person name="Andersson J.O."/>
            <person name="Sicheritz-Ponten T."/>
            <person name="Alsmark U.C.M."/>
            <person name="Podowski R.M."/>
            <person name="Naeslund A.K."/>
            <person name="Eriksson A.-S."/>
            <person name="Winkler H.H."/>
            <person name="Kurland C.G."/>
        </authorList>
    </citation>
    <scope>NUCLEOTIDE SEQUENCE [LARGE SCALE GENOMIC DNA]</scope>
    <source>
        <strain>Madrid E</strain>
    </source>
</reference>
<proteinExistence type="inferred from homology"/>